<organism>
    <name type="scientific">Triticum aestivum</name>
    <name type="common">Wheat</name>
    <dbReference type="NCBI Taxonomy" id="4565"/>
    <lineage>
        <taxon>Eukaryota</taxon>
        <taxon>Viridiplantae</taxon>
        <taxon>Streptophyta</taxon>
        <taxon>Embryophyta</taxon>
        <taxon>Tracheophyta</taxon>
        <taxon>Spermatophyta</taxon>
        <taxon>Magnoliopsida</taxon>
        <taxon>Liliopsida</taxon>
        <taxon>Poales</taxon>
        <taxon>Poaceae</taxon>
        <taxon>BOP clade</taxon>
        <taxon>Pooideae</taxon>
        <taxon>Triticodae</taxon>
        <taxon>Triticeae</taxon>
        <taxon>Triticinae</taxon>
        <taxon>Triticum</taxon>
    </lineage>
</organism>
<protein>
    <recommendedName>
        <fullName>Defensin-like protein 1</fullName>
    </recommendedName>
    <alternativeName>
        <fullName>Gamma-1-purothionin</fullName>
    </alternativeName>
</protein>
<evidence type="ECO:0000250" key="1"/>
<evidence type="ECO:0000305" key="2"/>
<evidence type="ECO:0007829" key="3">
    <source>
        <dbReference type="PDB" id="1GPS"/>
    </source>
</evidence>
<sequence>KICRRRSAGFKGPCMSNKNCAQVCQQEGWGGGNCDGPFRRCKCIRQC</sequence>
<proteinExistence type="evidence at protein level"/>
<name>DEF1_WHEAT</name>
<accession>P20158</accession>
<feature type="chain" id="PRO_0000074261" description="Defensin-like protein 1">
    <location>
        <begin position="1"/>
        <end position="47"/>
    </location>
</feature>
<feature type="site" description="Interaction with trypsin" evidence="1">
    <location>
        <position position="11"/>
    </location>
</feature>
<feature type="disulfide bond">
    <location>
        <begin position="3"/>
        <end position="47"/>
    </location>
</feature>
<feature type="disulfide bond">
    <location>
        <begin position="14"/>
        <end position="34"/>
    </location>
</feature>
<feature type="disulfide bond">
    <location>
        <begin position="20"/>
        <end position="41"/>
    </location>
</feature>
<feature type="disulfide bond">
    <location>
        <begin position="24"/>
        <end position="43"/>
    </location>
</feature>
<feature type="strand" evidence="3">
    <location>
        <begin position="2"/>
        <end position="6"/>
    </location>
</feature>
<feature type="helix" evidence="3">
    <location>
        <begin position="17"/>
        <end position="26"/>
    </location>
</feature>
<feature type="strand" evidence="3">
    <location>
        <begin position="30"/>
        <end position="35"/>
    </location>
</feature>
<feature type="turn" evidence="3">
    <location>
        <begin position="36"/>
        <end position="39"/>
    </location>
</feature>
<feature type="strand" evidence="3">
    <location>
        <begin position="40"/>
        <end position="46"/>
    </location>
</feature>
<dbReference type="PDB" id="1GPS">
    <property type="method" value="NMR"/>
    <property type="chains" value="A=1-47"/>
</dbReference>
<dbReference type="PDBsum" id="1GPS"/>
<dbReference type="SMR" id="P20158"/>
<dbReference type="PaxDb" id="4565-Traes_5BL_C4B27C0A9.1"/>
<dbReference type="eggNOG" id="ENOG502S7BC">
    <property type="taxonomic scope" value="Eukaryota"/>
</dbReference>
<dbReference type="EvolutionaryTrace" id="P20158"/>
<dbReference type="Proteomes" id="UP000019116">
    <property type="component" value="Unplaced"/>
</dbReference>
<dbReference type="ExpressionAtlas" id="P20158">
    <property type="expression patterns" value="baseline and differential"/>
</dbReference>
<dbReference type="GO" id="GO:0006952">
    <property type="term" value="P:defense response"/>
    <property type="evidence" value="ECO:0000318"/>
    <property type="project" value="GO_Central"/>
</dbReference>
<dbReference type="GO" id="GO:0050832">
    <property type="term" value="P:defense response to fungus"/>
    <property type="evidence" value="ECO:0007669"/>
    <property type="project" value="UniProtKB-KW"/>
</dbReference>
<dbReference type="GO" id="GO:0031640">
    <property type="term" value="P:killing of cells of another organism"/>
    <property type="evidence" value="ECO:0007669"/>
    <property type="project" value="UniProtKB-KW"/>
</dbReference>
<dbReference type="CDD" id="cd00107">
    <property type="entry name" value="Knot1"/>
    <property type="match status" value="1"/>
</dbReference>
<dbReference type="Gene3D" id="3.30.30.10">
    <property type="entry name" value="Knottin, scorpion toxin-like"/>
    <property type="match status" value="1"/>
</dbReference>
<dbReference type="InterPro" id="IPR008176">
    <property type="entry name" value="Defensin_plant"/>
</dbReference>
<dbReference type="InterPro" id="IPR003614">
    <property type="entry name" value="Scorpion_toxin-like"/>
</dbReference>
<dbReference type="InterPro" id="IPR036574">
    <property type="entry name" value="Scorpion_toxin-like_sf"/>
</dbReference>
<dbReference type="Pfam" id="PF00304">
    <property type="entry name" value="Gamma-thionin"/>
    <property type="match status" value="1"/>
</dbReference>
<dbReference type="PRINTS" id="PR00288">
    <property type="entry name" value="PUROTHIONIN"/>
</dbReference>
<dbReference type="SMART" id="SM00505">
    <property type="entry name" value="Knot1"/>
    <property type="match status" value="1"/>
</dbReference>
<dbReference type="SUPFAM" id="SSF57095">
    <property type="entry name" value="Scorpion toxin-like"/>
    <property type="match status" value="1"/>
</dbReference>
<dbReference type="PROSITE" id="PS00940">
    <property type="entry name" value="GAMMA_THIONIN"/>
    <property type="match status" value="1"/>
</dbReference>
<comment type="function">
    <text>Inhibits protein translation in cell-free systems.</text>
</comment>
<comment type="similarity">
    <text evidence="2">Belongs to the DEFL family.</text>
</comment>
<comment type="caution">
    <text evidence="2">Was initially thought to be a thionin (PubMed:2226781, PubMed:8380707).</text>
</comment>
<keyword id="KW-0002">3D-structure</keyword>
<keyword id="KW-0929">Antimicrobial</keyword>
<keyword id="KW-0903">Direct protein sequencing</keyword>
<keyword id="KW-1015">Disulfide bond</keyword>
<keyword id="KW-0295">Fungicide</keyword>
<keyword id="KW-0611">Plant defense</keyword>
<keyword id="KW-1185">Reference proteome</keyword>
<reference key="1">
    <citation type="journal article" date="1990" name="FEBS Lett.">
        <title>Gamma-purothionins: amino acid sequence of two polypeptides of a new family of thionins from wheat endosperm.</title>
        <authorList>
            <person name="Colilla F.J."/>
            <person name="Rocher A."/>
            <person name="Mendez E."/>
        </authorList>
    </citation>
    <scope>PROTEIN SEQUENCE</scope>
    <source>
        <strain>cv. Senatore Capelli</strain>
        <tissue>Endosperm</tissue>
    </source>
</reference>
<reference key="2">
    <citation type="journal article" date="1993" name="Biochemistry">
        <title>Solution structure of gamma 1-H and gamma 1-P thionins from barley and wheat endosperm determined by 1H-NMR: a structural motif common to toxic arthropod proteins.</title>
        <authorList>
            <person name="Bruix M."/>
            <person name="Jimenez M.A."/>
            <person name="Santoro J."/>
            <person name="Gonzalez C."/>
            <person name="Colilla F.J."/>
            <person name="Mendez E."/>
            <person name="Rico M."/>
        </authorList>
    </citation>
    <scope>STRUCTURE BY NMR</scope>
</reference>